<feature type="chain" id="PRO_1000007782" description="5'-nucleotidase SurE">
    <location>
        <begin position="1"/>
        <end position="255"/>
    </location>
</feature>
<feature type="binding site" evidence="1">
    <location>
        <position position="8"/>
    </location>
    <ligand>
        <name>a divalent metal cation</name>
        <dbReference type="ChEBI" id="CHEBI:60240"/>
    </ligand>
</feature>
<feature type="binding site" evidence="1">
    <location>
        <position position="9"/>
    </location>
    <ligand>
        <name>a divalent metal cation</name>
        <dbReference type="ChEBI" id="CHEBI:60240"/>
    </ligand>
</feature>
<feature type="binding site" evidence="1">
    <location>
        <position position="40"/>
    </location>
    <ligand>
        <name>a divalent metal cation</name>
        <dbReference type="ChEBI" id="CHEBI:60240"/>
    </ligand>
</feature>
<feature type="binding site" evidence="1">
    <location>
        <position position="93"/>
    </location>
    <ligand>
        <name>a divalent metal cation</name>
        <dbReference type="ChEBI" id="CHEBI:60240"/>
    </ligand>
</feature>
<sequence length="255" mass="27488">MRILCTNDDGIHAPGLKIVEQIARQLSDDVWVVAPELDQSGVSHSLSLNDPLRLREIGPRHFAVRGTPTDCVIMGARHILGDKGPDLVLSGVNKGRNVAEDVVYSGTIAGALEGSILGFPSFALSQEFSMDNKGTPLWETALAHGPAILRKIIDQGVPKNTVININFPACAPGDVVGVRVTRQGKRNQGFLRVDERRDGRGNPYFWIGFERIAVVDTPAEGTDLAALAAGYVSVTPLRLDRTDDVFSQVLNTTLG</sequence>
<proteinExistence type="inferred from homology"/>
<gene>
    <name evidence="1" type="primary">surE</name>
    <name type="ordered locus">RPC_2519</name>
</gene>
<organism>
    <name type="scientific">Rhodopseudomonas palustris (strain BisB18)</name>
    <dbReference type="NCBI Taxonomy" id="316056"/>
    <lineage>
        <taxon>Bacteria</taxon>
        <taxon>Pseudomonadati</taxon>
        <taxon>Pseudomonadota</taxon>
        <taxon>Alphaproteobacteria</taxon>
        <taxon>Hyphomicrobiales</taxon>
        <taxon>Nitrobacteraceae</taxon>
        <taxon>Rhodopseudomonas</taxon>
    </lineage>
</organism>
<comment type="function">
    <text evidence="1">Nucleotidase that shows phosphatase activity on nucleoside 5'-monophosphates.</text>
</comment>
<comment type="catalytic activity">
    <reaction evidence="1">
        <text>a ribonucleoside 5'-phosphate + H2O = a ribonucleoside + phosphate</text>
        <dbReference type="Rhea" id="RHEA:12484"/>
        <dbReference type="ChEBI" id="CHEBI:15377"/>
        <dbReference type="ChEBI" id="CHEBI:18254"/>
        <dbReference type="ChEBI" id="CHEBI:43474"/>
        <dbReference type="ChEBI" id="CHEBI:58043"/>
        <dbReference type="EC" id="3.1.3.5"/>
    </reaction>
</comment>
<comment type="cofactor">
    <cofactor evidence="1">
        <name>a divalent metal cation</name>
        <dbReference type="ChEBI" id="CHEBI:60240"/>
    </cofactor>
    <text evidence="1">Binds 1 divalent metal cation per subunit.</text>
</comment>
<comment type="subcellular location">
    <subcellularLocation>
        <location evidence="1">Cytoplasm</location>
    </subcellularLocation>
</comment>
<comment type="similarity">
    <text evidence="1">Belongs to the SurE nucleotidase family.</text>
</comment>
<accession>Q214W6</accession>
<dbReference type="EC" id="3.1.3.5" evidence="1"/>
<dbReference type="EMBL" id="CP000301">
    <property type="protein sequence ID" value="ABD88070.1"/>
    <property type="molecule type" value="Genomic_DNA"/>
</dbReference>
<dbReference type="SMR" id="Q214W6"/>
<dbReference type="STRING" id="316056.RPC_2519"/>
<dbReference type="KEGG" id="rpc:RPC_2519"/>
<dbReference type="eggNOG" id="COG0496">
    <property type="taxonomic scope" value="Bacteria"/>
</dbReference>
<dbReference type="HOGENOM" id="CLU_045192_1_2_5"/>
<dbReference type="OrthoDB" id="9780815at2"/>
<dbReference type="GO" id="GO:0005737">
    <property type="term" value="C:cytoplasm"/>
    <property type="evidence" value="ECO:0007669"/>
    <property type="project" value="UniProtKB-SubCell"/>
</dbReference>
<dbReference type="GO" id="GO:0008254">
    <property type="term" value="F:3'-nucleotidase activity"/>
    <property type="evidence" value="ECO:0007669"/>
    <property type="project" value="TreeGrafter"/>
</dbReference>
<dbReference type="GO" id="GO:0008253">
    <property type="term" value="F:5'-nucleotidase activity"/>
    <property type="evidence" value="ECO:0007669"/>
    <property type="project" value="UniProtKB-UniRule"/>
</dbReference>
<dbReference type="GO" id="GO:0004309">
    <property type="term" value="F:exopolyphosphatase activity"/>
    <property type="evidence" value="ECO:0007669"/>
    <property type="project" value="TreeGrafter"/>
</dbReference>
<dbReference type="GO" id="GO:0046872">
    <property type="term" value="F:metal ion binding"/>
    <property type="evidence" value="ECO:0007669"/>
    <property type="project" value="UniProtKB-UniRule"/>
</dbReference>
<dbReference type="GO" id="GO:0000166">
    <property type="term" value="F:nucleotide binding"/>
    <property type="evidence" value="ECO:0007669"/>
    <property type="project" value="UniProtKB-KW"/>
</dbReference>
<dbReference type="FunFam" id="3.40.1210.10:FF:000001">
    <property type="entry name" value="5'/3'-nucleotidase SurE"/>
    <property type="match status" value="1"/>
</dbReference>
<dbReference type="Gene3D" id="3.40.1210.10">
    <property type="entry name" value="Survival protein SurE-like phosphatase/nucleotidase"/>
    <property type="match status" value="1"/>
</dbReference>
<dbReference type="HAMAP" id="MF_00060">
    <property type="entry name" value="SurE"/>
    <property type="match status" value="1"/>
</dbReference>
<dbReference type="InterPro" id="IPR030048">
    <property type="entry name" value="SurE"/>
</dbReference>
<dbReference type="InterPro" id="IPR002828">
    <property type="entry name" value="SurE-like_Pase/nucleotidase"/>
</dbReference>
<dbReference type="InterPro" id="IPR036523">
    <property type="entry name" value="SurE-like_sf"/>
</dbReference>
<dbReference type="NCBIfam" id="NF001490">
    <property type="entry name" value="PRK00346.1-4"/>
    <property type="match status" value="1"/>
</dbReference>
<dbReference type="NCBIfam" id="TIGR00087">
    <property type="entry name" value="surE"/>
    <property type="match status" value="1"/>
</dbReference>
<dbReference type="PANTHER" id="PTHR30457">
    <property type="entry name" value="5'-NUCLEOTIDASE SURE"/>
    <property type="match status" value="1"/>
</dbReference>
<dbReference type="PANTHER" id="PTHR30457:SF12">
    <property type="entry name" value="5'_3'-NUCLEOTIDASE SURE"/>
    <property type="match status" value="1"/>
</dbReference>
<dbReference type="Pfam" id="PF01975">
    <property type="entry name" value="SurE"/>
    <property type="match status" value="1"/>
</dbReference>
<dbReference type="SUPFAM" id="SSF64167">
    <property type="entry name" value="SurE-like"/>
    <property type="match status" value="1"/>
</dbReference>
<reference key="1">
    <citation type="submission" date="2006-03" db="EMBL/GenBank/DDBJ databases">
        <title>Complete sequence of Rhodopseudomonas palustris BisB18.</title>
        <authorList>
            <consortium name="US DOE Joint Genome Institute"/>
            <person name="Copeland A."/>
            <person name="Lucas S."/>
            <person name="Lapidus A."/>
            <person name="Barry K."/>
            <person name="Detter J.C."/>
            <person name="Glavina del Rio T."/>
            <person name="Hammon N."/>
            <person name="Israni S."/>
            <person name="Dalin E."/>
            <person name="Tice H."/>
            <person name="Pitluck S."/>
            <person name="Chain P."/>
            <person name="Malfatti S."/>
            <person name="Shin M."/>
            <person name="Vergez L."/>
            <person name="Schmutz J."/>
            <person name="Larimer F."/>
            <person name="Land M."/>
            <person name="Hauser L."/>
            <person name="Pelletier D.A."/>
            <person name="Kyrpides N."/>
            <person name="Anderson I."/>
            <person name="Oda Y."/>
            <person name="Harwood C.S."/>
            <person name="Richardson P."/>
        </authorList>
    </citation>
    <scope>NUCLEOTIDE SEQUENCE [LARGE SCALE GENOMIC DNA]</scope>
    <source>
        <strain>BisB18</strain>
    </source>
</reference>
<name>SURE_RHOPB</name>
<protein>
    <recommendedName>
        <fullName evidence="1">5'-nucleotidase SurE</fullName>
        <ecNumber evidence="1">3.1.3.5</ecNumber>
    </recommendedName>
    <alternativeName>
        <fullName evidence="1">Nucleoside 5'-monophosphate phosphohydrolase</fullName>
    </alternativeName>
</protein>
<evidence type="ECO:0000255" key="1">
    <source>
        <dbReference type="HAMAP-Rule" id="MF_00060"/>
    </source>
</evidence>
<keyword id="KW-0963">Cytoplasm</keyword>
<keyword id="KW-0378">Hydrolase</keyword>
<keyword id="KW-0479">Metal-binding</keyword>
<keyword id="KW-0547">Nucleotide-binding</keyword>